<protein>
    <recommendedName>
        <fullName evidence="1">Siroheme synthase</fullName>
    </recommendedName>
    <domain>
        <recommendedName>
            <fullName evidence="1">Uroporphyrinogen-III C-methyltransferase</fullName>
            <shortName evidence="1">Urogen III methylase</shortName>
            <ecNumber evidence="1">2.1.1.107</ecNumber>
        </recommendedName>
        <alternativeName>
            <fullName evidence="1">SUMT</fullName>
        </alternativeName>
        <alternativeName>
            <fullName evidence="1">Uroporphyrinogen III methylase</fullName>
            <shortName evidence="1">UROM</shortName>
        </alternativeName>
    </domain>
    <domain>
        <recommendedName>
            <fullName evidence="1">Precorrin-2 dehydrogenase</fullName>
            <ecNumber evidence="1">1.3.1.76</ecNumber>
        </recommendedName>
    </domain>
    <domain>
        <recommendedName>
            <fullName evidence="1">Sirohydrochlorin ferrochelatase</fullName>
            <ecNumber evidence="1">4.99.1.4</ecNumber>
        </recommendedName>
    </domain>
</protein>
<proteinExistence type="inferred from homology"/>
<comment type="function">
    <text evidence="1">Multifunctional enzyme that catalyzes the SAM-dependent methylations of uroporphyrinogen III at position C-2 and C-7 to form precorrin-2 via precorrin-1. Then it catalyzes the NAD-dependent ring dehydrogenation of precorrin-2 to yield sirohydrochlorin. Finally, it catalyzes the ferrochelation of sirohydrochlorin to yield siroheme.</text>
</comment>
<comment type="catalytic activity">
    <reaction evidence="1">
        <text>uroporphyrinogen III + 2 S-adenosyl-L-methionine = precorrin-2 + 2 S-adenosyl-L-homocysteine + H(+)</text>
        <dbReference type="Rhea" id="RHEA:32459"/>
        <dbReference type="ChEBI" id="CHEBI:15378"/>
        <dbReference type="ChEBI" id="CHEBI:57308"/>
        <dbReference type="ChEBI" id="CHEBI:57856"/>
        <dbReference type="ChEBI" id="CHEBI:58827"/>
        <dbReference type="ChEBI" id="CHEBI:59789"/>
        <dbReference type="EC" id="2.1.1.107"/>
    </reaction>
</comment>
<comment type="catalytic activity">
    <reaction evidence="1">
        <text>precorrin-2 + NAD(+) = sirohydrochlorin + NADH + 2 H(+)</text>
        <dbReference type="Rhea" id="RHEA:15613"/>
        <dbReference type="ChEBI" id="CHEBI:15378"/>
        <dbReference type="ChEBI" id="CHEBI:57540"/>
        <dbReference type="ChEBI" id="CHEBI:57945"/>
        <dbReference type="ChEBI" id="CHEBI:58351"/>
        <dbReference type="ChEBI" id="CHEBI:58827"/>
        <dbReference type="EC" id="1.3.1.76"/>
    </reaction>
</comment>
<comment type="catalytic activity">
    <reaction evidence="1">
        <text>siroheme + 2 H(+) = sirohydrochlorin + Fe(2+)</text>
        <dbReference type="Rhea" id="RHEA:24360"/>
        <dbReference type="ChEBI" id="CHEBI:15378"/>
        <dbReference type="ChEBI" id="CHEBI:29033"/>
        <dbReference type="ChEBI" id="CHEBI:58351"/>
        <dbReference type="ChEBI" id="CHEBI:60052"/>
        <dbReference type="EC" id="4.99.1.4"/>
    </reaction>
</comment>
<comment type="pathway">
    <text evidence="1">Cofactor biosynthesis; adenosylcobalamin biosynthesis; precorrin-2 from uroporphyrinogen III: step 1/1.</text>
</comment>
<comment type="pathway">
    <text evidence="1">Cofactor biosynthesis; adenosylcobalamin biosynthesis; sirohydrochlorin from precorrin-2: step 1/1.</text>
</comment>
<comment type="pathway">
    <text evidence="1">Porphyrin-containing compound metabolism; siroheme biosynthesis; precorrin-2 from uroporphyrinogen III: step 1/1.</text>
</comment>
<comment type="pathway">
    <text evidence="1">Porphyrin-containing compound metabolism; siroheme biosynthesis; siroheme from sirohydrochlorin: step 1/1.</text>
</comment>
<comment type="pathway">
    <text evidence="1">Porphyrin-containing compound metabolism; siroheme biosynthesis; sirohydrochlorin from precorrin-2: step 1/1.</text>
</comment>
<comment type="similarity">
    <text evidence="1">In the N-terminal section; belongs to the precorrin-2 dehydrogenase / sirohydrochlorin ferrochelatase family.</text>
</comment>
<comment type="similarity">
    <text evidence="1">In the C-terminal section; belongs to the precorrin methyltransferase family.</text>
</comment>
<feature type="chain" id="PRO_1000186951" description="Siroheme synthase">
    <location>
        <begin position="1"/>
        <end position="457"/>
    </location>
</feature>
<feature type="region of interest" description="Precorrin-2 dehydrogenase /sirohydrochlorin ferrochelatase" evidence="1">
    <location>
        <begin position="1"/>
        <end position="204"/>
    </location>
</feature>
<feature type="region of interest" description="Uroporphyrinogen-III C-methyltransferase" evidence="1">
    <location>
        <begin position="216"/>
        <end position="457"/>
    </location>
</feature>
<feature type="active site" description="Proton acceptor" evidence="1">
    <location>
        <position position="248"/>
    </location>
</feature>
<feature type="active site" description="Proton donor" evidence="1">
    <location>
        <position position="270"/>
    </location>
</feature>
<feature type="binding site" evidence="1">
    <location>
        <begin position="22"/>
        <end position="23"/>
    </location>
    <ligand>
        <name>NAD(+)</name>
        <dbReference type="ChEBI" id="CHEBI:57540"/>
    </ligand>
</feature>
<feature type="binding site" evidence="1">
    <location>
        <begin position="43"/>
        <end position="44"/>
    </location>
    <ligand>
        <name>NAD(+)</name>
        <dbReference type="ChEBI" id="CHEBI:57540"/>
    </ligand>
</feature>
<feature type="binding site" evidence="1">
    <location>
        <position position="225"/>
    </location>
    <ligand>
        <name>S-adenosyl-L-methionine</name>
        <dbReference type="ChEBI" id="CHEBI:59789"/>
    </ligand>
</feature>
<feature type="binding site" evidence="1">
    <location>
        <begin position="301"/>
        <end position="303"/>
    </location>
    <ligand>
        <name>S-adenosyl-L-methionine</name>
        <dbReference type="ChEBI" id="CHEBI:59789"/>
    </ligand>
</feature>
<feature type="binding site" evidence="1">
    <location>
        <position position="306"/>
    </location>
    <ligand>
        <name>S-adenosyl-L-methionine</name>
        <dbReference type="ChEBI" id="CHEBI:59789"/>
    </ligand>
</feature>
<feature type="binding site" evidence="1">
    <location>
        <begin position="331"/>
        <end position="332"/>
    </location>
    <ligand>
        <name>S-adenosyl-L-methionine</name>
        <dbReference type="ChEBI" id="CHEBI:59789"/>
    </ligand>
</feature>
<feature type="binding site" evidence="1">
    <location>
        <position position="382"/>
    </location>
    <ligand>
        <name>S-adenosyl-L-methionine</name>
        <dbReference type="ChEBI" id="CHEBI:59789"/>
    </ligand>
</feature>
<feature type="binding site" evidence="1">
    <location>
        <position position="411"/>
    </location>
    <ligand>
        <name>S-adenosyl-L-methionine</name>
        <dbReference type="ChEBI" id="CHEBI:59789"/>
    </ligand>
</feature>
<feature type="modified residue" description="Phosphoserine" evidence="1">
    <location>
        <position position="128"/>
    </location>
</feature>
<reference key="1">
    <citation type="journal article" date="2011" name="J. Bacteriol.">
        <title>Comparative genomics of 28 Salmonella enterica isolates: evidence for CRISPR-mediated adaptive sublineage evolution.</title>
        <authorList>
            <person name="Fricke W.F."/>
            <person name="Mammel M.K."/>
            <person name="McDermott P.F."/>
            <person name="Tartera C."/>
            <person name="White D.G."/>
            <person name="Leclerc J.E."/>
            <person name="Ravel J."/>
            <person name="Cebula T.A."/>
        </authorList>
    </citation>
    <scope>NUCLEOTIDE SEQUENCE [LARGE SCALE GENOMIC DNA]</scope>
    <source>
        <strain>CT_02021853</strain>
    </source>
</reference>
<evidence type="ECO:0000255" key="1">
    <source>
        <dbReference type="HAMAP-Rule" id="MF_01646"/>
    </source>
</evidence>
<organism>
    <name type="scientific">Salmonella dublin (strain CT_02021853)</name>
    <dbReference type="NCBI Taxonomy" id="439851"/>
    <lineage>
        <taxon>Bacteria</taxon>
        <taxon>Pseudomonadati</taxon>
        <taxon>Pseudomonadota</taxon>
        <taxon>Gammaproteobacteria</taxon>
        <taxon>Enterobacterales</taxon>
        <taxon>Enterobacteriaceae</taxon>
        <taxon>Salmonella</taxon>
    </lineage>
</organism>
<name>CYSG_SALDC</name>
<keyword id="KW-0169">Cobalamin biosynthesis</keyword>
<keyword id="KW-0456">Lyase</keyword>
<keyword id="KW-0489">Methyltransferase</keyword>
<keyword id="KW-0511">Multifunctional enzyme</keyword>
<keyword id="KW-0520">NAD</keyword>
<keyword id="KW-0560">Oxidoreductase</keyword>
<keyword id="KW-0597">Phosphoprotein</keyword>
<keyword id="KW-0627">Porphyrin biosynthesis</keyword>
<keyword id="KW-0949">S-adenosyl-L-methionine</keyword>
<keyword id="KW-0808">Transferase</keyword>
<accession>B5FJQ1</accession>
<dbReference type="EC" id="2.1.1.107" evidence="1"/>
<dbReference type="EC" id="1.3.1.76" evidence="1"/>
<dbReference type="EC" id="4.99.1.4" evidence="1"/>
<dbReference type="EMBL" id="CP001144">
    <property type="protein sequence ID" value="ACH76640.1"/>
    <property type="molecule type" value="Genomic_DNA"/>
</dbReference>
<dbReference type="RefSeq" id="WP_000349906.1">
    <property type="nucleotide sequence ID" value="NC_011205.1"/>
</dbReference>
<dbReference type="SMR" id="B5FJQ1"/>
<dbReference type="KEGG" id="sed:SeD_A3846"/>
<dbReference type="HOGENOM" id="CLU_011276_2_0_6"/>
<dbReference type="UniPathway" id="UPA00148">
    <property type="reaction ID" value="UER00211"/>
</dbReference>
<dbReference type="UniPathway" id="UPA00148">
    <property type="reaction ID" value="UER00222"/>
</dbReference>
<dbReference type="UniPathway" id="UPA00262">
    <property type="reaction ID" value="UER00211"/>
</dbReference>
<dbReference type="UniPathway" id="UPA00262">
    <property type="reaction ID" value="UER00222"/>
</dbReference>
<dbReference type="UniPathway" id="UPA00262">
    <property type="reaction ID" value="UER00376"/>
</dbReference>
<dbReference type="Proteomes" id="UP000008322">
    <property type="component" value="Chromosome"/>
</dbReference>
<dbReference type="GO" id="GO:0051287">
    <property type="term" value="F:NAD binding"/>
    <property type="evidence" value="ECO:0007669"/>
    <property type="project" value="InterPro"/>
</dbReference>
<dbReference type="GO" id="GO:0043115">
    <property type="term" value="F:precorrin-2 dehydrogenase activity"/>
    <property type="evidence" value="ECO:0007669"/>
    <property type="project" value="UniProtKB-UniRule"/>
</dbReference>
<dbReference type="GO" id="GO:0051266">
    <property type="term" value="F:sirohydrochlorin ferrochelatase activity"/>
    <property type="evidence" value="ECO:0007669"/>
    <property type="project" value="UniProtKB-EC"/>
</dbReference>
<dbReference type="GO" id="GO:0004851">
    <property type="term" value="F:uroporphyrin-III C-methyltransferase activity"/>
    <property type="evidence" value="ECO:0007669"/>
    <property type="project" value="UniProtKB-UniRule"/>
</dbReference>
<dbReference type="GO" id="GO:0009236">
    <property type="term" value="P:cobalamin biosynthetic process"/>
    <property type="evidence" value="ECO:0007669"/>
    <property type="project" value="UniProtKB-UniRule"/>
</dbReference>
<dbReference type="GO" id="GO:0032259">
    <property type="term" value="P:methylation"/>
    <property type="evidence" value="ECO:0007669"/>
    <property type="project" value="UniProtKB-KW"/>
</dbReference>
<dbReference type="GO" id="GO:0019354">
    <property type="term" value="P:siroheme biosynthetic process"/>
    <property type="evidence" value="ECO:0007669"/>
    <property type="project" value="UniProtKB-UniRule"/>
</dbReference>
<dbReference type="CDD" id="cd11642">
    <property type="entry name" value="SUMT"/>
    <property type="match status" value="1"/>
</dbReference>
<dbReference type="FunFam" id="1.10.8.210:FF:000001">
    <property type="entry name" value="Siroheme synthase"/>
    <property type="match status" value="1"/>
</dbReference>
<dbReference type="FunFam" id="3.30.160.110:FF:000001">
    <property type="entry name" value="Siroheme synthase"/>
    <property type="match status" value="1"/>
</dbReference>
<dbReference type="FunFam" id="3.30.950.10:FF:000001">
    <property type="entry name" value="Siroheme synthase"/>
    <property type="match status" value="1"/>
</dbReference>
<dbReference type="FunFam" id="3.40.1010.10:FF:000001">
    <property type="entry name" value="Siroheme synthase"/>
    <property type="match status" value="1"/>
</dbReference>
<dbReference type="FunFam" id="3.40.50.720:FF:000092">
    <property type="entry name" value="Siroheme synthase"/>
    <property type="match status" value="1"/>
</dbReference>
<dbReference type="Gene3D" id="3.40.1010.10">
    <property type="entry name" value="Cobalt-precorrin-4 Transmethylase, Domain 1"/>
    <property type="match status" value="1"/>
</dbReference>
<dbReference type="Gene3D" id="3.30.950.10">
    <property type="entry name" value="Methyltransferase, Cobalt-precorrin-4 Transmethylase, Domain 2"/>
    <property type="match status" value="1"/>
</dbReference>
<dbReference type="Gene3D" id="3.40.50.720">
    <property type="entry name" value="NAD(P)-binding Rossmann-like Domain"/>
    <property type="match status" value="1"/>
</dbReference>
<dbReference type="Gene3D" id="1.10.8.210">
    <property type="entry name" value="Sirohaem synthase, dimerisation domain"/>
    <property type="match status" value="1"/>
</dbReference>
<dbReference type="Gene3D" id="3.30.160.110">
    <property type="entry name" value="Siroheme synthase, domain 2"/>
    <property type="match status" value="1"/>
</dbReference>
<dbReference type="HAMAP" id="MF_01646">
    <property type="entry name" value="Siroheme_synth"/>
    <property type="match status" value="1"/>
</dbReference>
<dbReference type="InterPro" id="IPR000878">
    <property type="entry name" value="4pyrrol_Mease"/>
</dbReference>
<dbReference type="InterPro" id="IPR035996">
    <property type="entry name" value="4pyrrol_Methylase_sf"/>
</dbReference>
<dbReference type="InterPro" id="IPR014777">
    <property type="entry name" value="4pyrrole_Mease_sub1"/>
</dbReference>
<dbReference type="InterPro" id="IPR014776">
    <property type="entry name" value="4pyrrole_Mease_sub2"/>
</dbReference>
<dbReference type="InterPro" id="IPR006366">
    <property type="entry name" value="CobA/CysG_C"/>
</dbReference>
<dbReference type="InterPro" id="IPR036291">
    <property type="entry name" value="NAD(P)-bd_dom_sf"/>
</dbReference>
<dbReference type="InterPro" id="IPR050161">
    <property type="entry name" value="Siro_Cobalamin_biosynth"/>
</dbReference>
<dbReference type="InterPro" id="IPR037115">
    <property type="entry name" value="Sirohaem_synt_dimer_dom_sf"/>
</dbReference>
<dbReference type="InterPro" id="IPR012409">
    <property type="entry name" value="Sirohaem_synth"/>
</dbReference>
<dbReference type="InterPro" id="IPR028281">
    <property type="entry name" value="Sirohaem_synthase_central"/>
</dbReference>
<dbReference type="InterPro" id="IPR019478">
    <property type="entry name" value="Sirohaem_synthase_dimer_dom"/>
</dbReference>
<dbReference type="InterPro" id="IPR006367">
    <property type="entry name" value="Sirohaem_synthase_N"/>
</dbReference>
<dbReference type="InterPro" id="IPR003043">
    <property type="entry name" value="Uropor_MeTrfase_CS"/>
</dbReference>
<dbReference type="NCBIfam" id="TIGR01469">
    <property type="entry name" value="cobA_cysG_Cterm"/>
    <property type="match status" value="1"/>
</dbReference>
<dbReference type="NCBIfam" id="TIGR01470">
    <property type="entry name" value="cysG_Nterm"/>
    <property type="match status" value="1"/>
</dbReference>
<dbReference type="NCBIfam" id="NF004790">
    <property type="entry name" value="PRK06136.1"/>
    <property type="match status" value="1"/>
</dbReference>
<dbReference type="NCBIfam" id="NF007922">
    <property type="entry name" value="PRK10637.1"/>
    <property type="match status" value="1"/>
</dbReference>
<dbReference type="PANTHER" id="PTHR45790:SF1">
    <property type="entry name" value="SIROHEME SYNTHASE"/>
    <property type="match status" value="1"/>
</dbReference>
<dbReference type="PANTHER" id="PTHR45790">
    <property type="entry name" value="SIROHEME SYNTHASE-RELATED"/>
    <property type="match status" value="1"/>
</dbReference>
<dbReference type="Pfam" id="PF10414">
    <property type="entry name" value="CysG_dimeriser"/>
    <property type="match status" value="1"/>
</dbReference>
<dbReference type="Pfam" id="PF13241">
    <property type="entry name" value="NAD_binding_7"/>
    <property type="match status" value="1"/>
</dbReference>
<dbReference type="Pfam" id="PF14824">
    <property type="entry name" value="Sirohm_synth_M"/>
    <property type="match status" value="1"/>
</dbReference>
<dbReference type="Pfam" id="PF00590">
    <property type="entry name" value="TP_methylase"/>
    <property type="match status" value="1"/>
</dbReference>
<dbReference type="PIRSF" id="PIRSF036426">
    <property type="entry name" value="Sirohaem_synth"/>
    <property type="match status" value="1"/>
</dbReference>
<dbReference type="SUPFAM" id="SSF51735">
    <property type="entry name" value="NAD(P)-binding Rossmann-fold domains"/>
    <property type="match status" value="1"/>
</dbReference>
<dbReference type="SUPFAM" id="SSF75615">
    <property type="entry name" value="Siroheme synthase middle domains-like"/>
    <property type="match status" value="1"/>
</dbReference>
<dbReference type="SUPFAM" id="SSF53790">
    <property type="entry name" value="Tetrapyrrole methylase"/>
    <property type="match status" value="1"/>
</dbReference>
<dbReference type="PROSITE" id="PS00839">
    <property type="entry name" value="SUMT_1"/>
    <property type="match status" value="1"/>
</dbReference>
<dbReference type="PROSITE" id="PS00840">
    <property type="entry name" value="SUMT_2"/>
    <property type="match status" value="1"/>
</dbReference>
<gene>
    <name evidence="1" type="primary">cysG</name>
    <name type="ordered locus">SeD_A3846</name>
</gene>
<sequence length="457" mass="50158">MDHLPIFCQLRDRDCLIVGGGDVAERKARLLLEAGARLTVNALTFIPQFTVWANEGMLTLVKGPFDETLLDSCWLAIAATDDDTVNQRVSDAAESRRIFCNVVDAPKAASFIMPSIIDRSPLMVAVSSGGTSPVLARLLREKLESLLPQHLGQVARYAGQLRARVKKQFATMGERRRFWEKFFVNDRLAQSLANADEKAVNATTERLFSEPLDHRGEVVLVGAGPGDAGLLTLKGLQQIQQADIVVYDRLVSDDIMNLVRRDADRVFVGKRAGYHCVPQEEINQILLREAQKGKRVVRLKGGDPFIFGRGGEELETLCHAGIPFSVVPGITAASGCSAYSGIPLTHRDYAQSVRLVTGHLKTGGELDWENLAAEKQTLVFYMGLNQAATIQEKLIAFGMQADMPVALVENGTSVKQRVVHGVLTQLGELAQQVESPALIIVGRVVGLRDKLNWFSNY</sequence>